<feature type="initiator methionine" description="Removed" evidence="2">
    <location>
        <position position="1"/>
    </location>
</feature>
<feature type="chain" id="PRO_0000413801" description="SH2/SH3 adapter protein Nck1">
    <location>
        <begin position="2"/>
        <end position="377"/>
    </location>
</feature>
<feature type="domain" description="SH3 1" evidence="4">
    <location>
        <begin position="2"/>
        <end position="61"/>
    </location>
</feature>
<feature type="domain" description="SH3 2" evidence="4">
    <location>
        <begin position="106"/>
        <end position="165"/>
    </location>
</feature>
<feature type="domain" description="SH3 3" evidence="4">
    <location>
        <begin position="190"/>
        <end position="252"/>
    </location>
</feature>
<feature type="domain" description="SH2" evidence="3">
    <location>
        <begin position="282"/>
        <end position="376"/>
    </location>
</feature>
<feature type="modified residue" description="N-acetylalanine" evidence="2">
    <location>
        <position position="2"/>
    </location>
</feature>
<feature type="modified residue" description="Phosphoserine" evidence="7">
    <location>
        <position position="85"/>
    </location>
</feature>
<feature type="modified residue" description="Phosphoserine" evidence="2">
    <location>
        <position position="91"/>
    </location>
</feature>
<feature type="modified residue" description="Phosphoserine" evidence="2">
    <location>
        <position position="96"/>
    </location>
</feature>
<feature type="modified residue" description="Phosphotyrosine" evidence="6 7">
    <location>
        <position position="105"/>
    </location>
</feature>
<feature type="modified residue" description="Phosphoserine" evidence="7">
    <location>
        <position position="166"/>
    </location>
</feature>
<feature type="sequence conflict" description="In Ref. 1; AAD13752 and 2; AAC06352." evidence="5" ref="1 2">
    <original>E</original>
    <variation>G</variation>
    <location>
        <position position="4"/>
    </location>
</feature>
<feature type="sequence conflict" description="In Ref. 2; AAC06352." evidence="5" ref="2">
    <original>W</original>
    <variation>C</variation>
    <location>
        <position position="30"/>
    </location>
</feature>
<feature type="sequence conflict" description="In Ref. 2; AAC06352." evidence="5" ref="2">
    <original>T</original>
    <variation>N</variation>
    <location>
        <position position="74"/>
    </location>
</feature>
<feature type="sequence conflict" description="In Ref. 2; AAC06352." evidence="5" ref="2">
    <original>P</original>
    <variation>T</variation>
    <location>
        <position position="84"/>
    </location>
</feature>
<feature type="sequence conflict" description="In Ref. 2; AAC06352." evidence="5" ref="2">
    <original>A</original>
    <variation>E</variation>
    <location>
        <position position="90"/>
    </location>
</feature>
<feature type="sequence conflict" description="In Ref. 2; AAC06352." evidence="5" ref="2">
    <original>FPS</original>
    <variation>LPC</variation>
    <location>
        <begin position="155"/>
        <end position="157"/>
    </location>
</feature>
<feature type="sequence conflict" description="In Ref. 2; AAC06352." evidence="5" ref="2">
    <original>S</original>
    <variation>G</variation>
    <location>
        <position position="202"/>
    </location>
</feature>
<feature type="sequence conflict" description="In Ref. 2; AAC06352." evidence="5" ref="2">
    <original>D</original>
    <variation>N</variation>
    <location>
        <position position="206"/>
    </location>
</feature>
<feature type="sequence conflict" description="In Ref. 2; AAC06352." evidence="5" ref="2">
    <original>I</original>
    <variation>V</variation>
    <location>
        <position position="307"/>
    </location>
</feature>
<evidence type="ECO:0000250" key="1"/>
<evidence type="ECO:0000250" key="2">
    <source>
        <dbReference type="UniProtKB" id="P16333"/>
    </source>
</evidence>
<evidence type="ECO:0000255" key="3">
    <source>
        <dbReference type="PROSITE-ProRule" id="PRU00191"/>
    </source>
</evidence>
<evidence type="ECO:0000255" key="4">
    <source>
        <dbReference type="PROSITE-ProRule" id="PRU00192"/>
    </source>
</evidence>
<evidence type="ECO:0000305" key="5"/>
<evidence type="ECO:0007744" key="6">
    <source>
    </source>
</evidence>
<evidence type="ECO:0007744" key="7">
    <source>
    </source>
</evidence>
<protein>
    <recommendedName>
        <fullName evidence="5">SH2/SH3 adapter protein Nck1</fullName>
    </recommendedName>
    <alternativeName>
        <fullName>Cytoplasmic protein Nck1</fullName>
    </alternativeName>
    <alternativeName>
        <fullName>NCK adapter protein 1</fullName>
        <shortName>Nck-1</shortName>
    </alternativeName>
</protein>
<organism>
    <name type="scientific">Mus musculus</name>
    <name type="common">Mouse</name>
    <dbReference type="NCBI Taxonomy" id="10090"/>
    <lineage>
        <taxon>Eukaryota</taxon>
        <taxon>Metazoa</taxon>
        <taxon>Chordata</taxon>
        <taxon>Craniata</taxon>
        <taxon>Vertebrata</taxon>
        <taxon>Euteleostomi</taxon>
        <taxon>Mammalia</taxon>
        <taxon>Eutheria</taxon>
        <taxon>Euarchontoglires</taxon>
        <taxon>Glires</taxon>
        <taxon>Rodentia</taxon>
        <taxon>Myomorpha</taxon>
        <taxon>Muroidea</taxon>
        <taxon>Muridae</taxon>
        <taxon>Murinae</taxon>
        <taxon>Mus</taxon>
        <taxon>Mus</taxon>
    </lineage>
</organism>
<name>NCK1_MOUSE</name>
<comment type="function">
    <text evidence="2">Adapter protein which associates with tyrosine-phosphorylated growth factor receptors, such as KDR and PDGFRB, or their cellular substrates. Maintains low levels of EIF2S1 phosphorylation by promoting its dephosphorylation by PP1. Plays a role in the DNA damage response, not in the detection of the damage by ATM/ATR, but for efficient activation of downstream effectors, such as that of CHEK2. Plays a role in ELK1-dependent transcriptional activation in response to activated Ras signaling. Modulates the activation of EIF2AK2/PKR by dsRNA. May play a role in cell adhesion and migration through interaction with ephrin receptors. Also acts as an adpater protein for the T cell receptor complex (TCR-CD3E). Upon ligand engagement, is recruited by CD3E and promotes maturation of the immune synapse and T cell activation.</text>
</comment>
<comment type="subunit">
    <text evidence="2">Interacts (via SH2 domain and SH3 domain 2) with EGFR. Interacts with PAK1 and SOS1. Interacts (via SH3 domains) with PKN2. Associates with BLNK, PLCG1, VAV1 and NCK1 in a B-cell antigen receptor-dependent fashion. Interacts with SOCS7. This interaction is required for nuclear import. Part of a complex containing PPP1R15B, PP1 and NCK1. Interacts with RALGPS1. Interacts with CAV2 (tyrosine phosphorylated form). Interacts with ADAM15. Interacts with FASLG. Directly interacts with RASA1. Interacts with isoform 4 of MINK1. Interacts with FLT1 (tyrosine phosphorylated). Interacts with KDR (tyrosine phosphorylated). Interacts (via SH2 domain) with EPHB1; activates the JUN cascade to regulate cell adhesion. Interacts with EPHA2. Interacts (via SH2 domain) with PDGFRB (tyrosine phosphorylated). Interacts with the inactive form of EIF2AK2/PKR. Interacts with PTPN1. Interacts with INSR/insulin receptor (in response to insulin stimulation); this interaction may mediate PTPN1 recruitment leading to INSR dephosphorylation. Interacts with CD3E (via Proline-rich sequence); the interaction is ligand dependent but independent of tyrosine kinase activation. Interacts with EGFR. Interacts with IRS1.</text>
</comment>
<comment type="interaction">
    <interactant intactId="EBI-642202">
        <id>Q99M51</id>
    </interactant>
    <interactant intactId="EBI-914519">
        <id>P00520</id>
        <label>Abl1</label>
    </interactant>
    <organismsDiffer>false</organismsDiffer>
    <experiments>2</experiments>
</comment>
<comment type="interaction">
    <interactant intactId="EBI-642202">
        <id>Q99M51</id>
    </interactant>
    <interactant intactId="EBI-914917">
        <id>P97465</id>
        <label>Dok1</label>
    </interactant>
    <organismsDiffer>false</organismsDiffer>
    <experiments>5</experiments>
</comment>
<comment type="interaction">
    <interactant intactId="EBI-642202">
        <id>Q99M51</id>
    </interactant>
    <interactant intactId="EBI-7780354">
        <id>O54967</id>
        <label>Tnk2</label>
    </interactant>
    <organismsDiffer>false</organismsDiffer>
    <experiments>2</experiments>
</comment>
<comment type="subcellular location">
    <subcellularLocation>
        <location evidence="1">Cytoplasm</location>
    </subcellularLocation>
    <subcellularLocation>
        <location evidence="1">Endoplasmic reticulum</location>
    </subcellularLocation>
    <subcellularLocation>
        <location evidence="1">Nucleus</location>
    </subcellularLocation>
    <text evidence="1">Mostly cytoplasmic, but shuttles between the cytoplasm and the nucleus. Import into the nucleus requires interaction with SOCS7. Predominantly nuclear following genotoxic stresses, such as UV irradiation, hydroxyurea or mitomycin C treatments (By similarity).</text>
</comment>
<comment type="domain">
    <text evidence="2">Only the first and third SH3 domains seem to be involved in RASA1-binding; the second SH3 domain and the SH2 domains do not seem to be involved.</text>
</comment>
<comment type="PTM">
    <text evidence="2">Phosphorylated on Ser and Tyr residues. Phosphorylated in response to activation of EGFR and FcERI. Phosphorylated by activated PDGFRB.</text>
</comment>
<accession>Q99M51</accession>
<accession>O55032</accession>
<accession>Q9Z279</accession>
<dbReference type="EMBL" id="AF084183">
    <property type="protein sequence ID" value="AAD13752.1"/>
    <property type="molecule type" value="mRNA"/>
</dbReference>
<dbReference type="EMBL" id="AF043259">
    <property type="protein sequence ID" value="AAC06352.1"/>
    <property type="molecule type" value="mRNA"/>
</dbReference>
<dbReference type="EMBL" id="AC129223">
    <property type="status" value="NOT_ANNOTATED_CDS"/>
    <property type="molecule type" value="Genomic_DNA"/>
</dbReference>
<dbReference type="EMBL" id="CH466560">
    <property type="protein sequence ID" value="EDL21028.1"/>
    <property type="molecule type" value="Genomic_DNA"/>
</dbReference>
<dbReference type="EMBL" id="CH466560">
    <property type="protein sequence ID" value="EDL21029.1"/>
    <property type="molecule type" value="Genomic_DNA"/>
</dbReference>
<dbReference type="EMBL" id="CH466560">
    <property type="protein sequence ID" value="EDL21031.1"/>
    <property type="molecule type" value="Genomic_DNA"/>
</dbReference>
<dbReference type="EMBL" id="BC002015">
    <property type="protein sequence ID" value="AAH02015.1"/>
    <property type="molecule type" value="mRNA"/>
</dbReference>
<dbReference type="CCDS" id="CCDS23440.1"/>
<dbReference type="RefSeq" id="NP_035008.2">
    <property type="nucleotide sequence ID" value="NM_010878.3"/>
</dbReference>
<dbReference type="RefSeq" id="XP_006510903.1">
    <property type="nucleotide sequence ID" value="XM_006510840.4"/>
</dbReference>
<dbReference type="BMRB" id="Q99M51"/>
<dbReference type="SMR" id="Q99M51"/>
<dbReference type="BioGRID" id="201704">
    <property type="interactions" value="50"/>
</dbReference>
<dbReference type="CORUM" id="Q99M51"/>
<dbReference type="DIP" id="DIP-37524N"/>
<dbReference type="FunCoup" id="Q99M51">
    <property type="interactions" value="3663"/>
</dbReference>
<dbReference type="IntAct" id="Q99M51">
    <property type="interactions" value="17"/>
</dbReference>
<dbReference type="MINT" id="Q99M51"/>
<dbReference type="STRING" id="10090.ENSMUSP00000112221"/>
<dbReference type="iPTMnet" id="Q99M51"/>
<dbReference type="PhosphoSitePlus" id="Q99M51"/>
<dbReference type="SwissPalm" id="Q99M51"/>
<dbReference type="REPRODUCTION-2DPAGE" id="IPI00453999"/>
<dbReference type="jPOST" id="Q99M51"/>
<dbReference type="PaxDb" id="10090-ENSMUSP00000112221"/>
<dbReference type="PeptideAtlas" id="Q99M51"/>
<dbReference type="ProteomicsDB" id="286159"/>
<dbReference type="Pumba" id="Q99M51"/>
<dbReference type="Antibodypedia" id="3567">
    <property type="antibodies" value="549 antibodies from 39 providers"/>
</dbReference>
<dbReference type="DNASU" id="17973"/>
<dbReference type="Ensembl" id="ENSMUST00000116522.8">
    <property type="protein sequence ID" value="ENSMUSP00000112221.2"/>
    <property type="gene ID" value="ENSMUSG00000032475.16"/>
</dbReference>
<dbReference type="GeneID" id="17973"/>
<dbReference type="KEGG" id="mmu:17973"/>
<dbReference type="UCSC" id="uc009rex.1">
    <property type="organism name" value="mouse"/>
</dbReference>
<dbReference type="AGR" id="MGI:109601"/>
<dbReference type="CTD" id="4690"/>
<dbReference type="MGI" id="MGI:109601">
    <property type="gene designation" value="Nck1"/>
</dbReference>
<dbReference type="VEuPathDB" id="HostDB:ENSMUSG00000032475"/>
<dbReference type="eggNOG" id="KOG4226">
    <property type="taxonomic scope" value="Eukaryota"/>
</dbReference>
<dbReference type="GeneTree" id="ENSGT00940000156601"/>
<dbReference type="HOGENOM" id="CLU_025160_0_1_1"/>
<dbReference type="InParanoid" id="Q99M51"/>
<dbReference type="OMA" id="ADTDMST"/>
<dbReference type="OrthoDB" id="26539at2759"/>
<dbReference type="PhylomeDB" id="Q99M51"/>
<dbReference type="TreeFam" id="TF351631"/>
<dbReference type="Reactome" id="R-MMU-186763">
    <property type="pathway name" value="Downstream signal transduction"/>
</dbReference>
<dbReference type="Reactome" id="R-MMU-202433">
    <property type="pathway name" value="Generation of second messenger molecules"/>
</dbReference>
<dbReference type="Reactome" id="R-MMU-2029482">
    <property type="pathway name" value="Regulation of actin dynamics for phagocytic cup formation"/>
</dbReference>
<dbReference type="Reactome" id="R-MMU-373753">
    <property type="pathway name" value="Nephrin family interactions"/>
</dbReference>
<dbReference type="Reactome" id="R-MMU-418885">
    <property type="pathway name" value="DCC mediated attractive signaling"/>
</dbReference>
<dbReference type="Reactome" id="R-MMU-4420097">
    <property type="pathway name" value="VEGFA-VEGFR2 Pathway"/>
</dbReference>
<dbReference type="Reactome" id="R-MMU-5663213">
    <property type="pathway name" value="RHO GTPases Activate WASPs and WAVEs"/>
</dbReference>
<dbReference type="Reactome" id="R-MMU-9013420">
    <property type="pathway name" value="RHOU GTPase cycle"/>
</dbReference>
<dbReference type="Reactome" id="R-MMU-9013424">
    <property type="pathway name" value="RHOV GTPase cycle"/>
</dbReference>
<dbReference type="Reactome" id="R-MMU-9833482">
    <property type="pathway name" value="PKR-mediated signaling"/>
</dbReference>
<dbReference type="Reactome" id="R-MMU-983695">
    <property type="pathway name" value="Antigen activates B Cell Receptor (BCR) leading to generation of second messengers"/>
</dbReference>
<dbReference type="BioGRID-ORCS" id="17973">
    <property type="hits" value="3 hits in 76 CRISPR screens"/>
</dbReference>
<dbReference type="ChiTaRS" id="Nck1">
    <property type="organism name" value="mouse"/>
</dbReference>
<dbReference type="PRO" id="PR:Q99M51"/>
<dbReference type="Proteomes" id="UP000000589">
    <property type="component" value="Chromosome 9"/>
</dbReference>
<dbReference type="RNAct" id="Q99M51">
    <property type="molecule type" value="protein"/>
</dbReference>
<dbReference type="Bgee" id="ENSMUSG00000032475">
    <property type="expression patterns" value="Expressed in granulocyte and 245 other cell types or tissues"/>
</dbReference>
<dbReference type="ExpressionAtlas" id="Q99M51">
    <property type="expression patterns" value="baseline and differential"/>
</dbReference>
<dbReference type="GO" id="GO:0005911">
    <property type="term" value="C:cell-cell junction"/>
    <property type="evidence" value="ECO:0000314"/>
    <property type="project" value="MGI"/>
</dbReference>
<dbReference type="GO" id="GO:0005829">
    <property type="term" value="C:cytosol"/>
    <property type="evidence" value="ECO:0007669"/>
    <property type="project" value="Ensembl"/>
</dbReference>
<dbReference type="GO" id="GO:0005783">
    <property type="term" value="C:endoplasmic reticulum"/>
    <property type="evidence" value="ECO:0007669"/>
    <property type="project" value="UniProtKB-SubCell"/>
</dbReference>
<dbReference type="GO" id="GO:0005634">
    <property type="term" value="C:nucleus"/>
    <property type="evidence" value="ECO:0007669"/>
    <property type="project" value="UniProtKB-SubCell"/>
</dbReference>
<dbReference type="GO" id="GO:0005886">
    <property type="term" value="C:plasma membrane"/>
    <property type="evidence" value="ECO:0007669"/>
    <property type="project" value="Ensembl"/>
</dbReference>
<dbReference type="GO" id="GO:0000164">
    <property type="term" value="C:protein phosphatase type 1 complex"/>
    <property type="evidence" value="ECO:0007669"/>
    <property type="project" value="Ensembl"/>
</dbReference>
<dbReference type="GO" id="GO:0005840">
    <property type="term" value="C:ribosome"/>
    <property type="evidence" value="ECO:0007669"/>
    <property type="project" value="Ensembl"/>
</dbReference>
<dbReference type="GO" id="GO:0012506">
    <property type="term" value="C:vesicle membrane"/>
    <property type="evidence" value="ECO:0000314"/>
    <property type="project" value="MGI"/>
</dbReference>
<dbReference type="GO" id="GO:0046875">
    <property type="term" value="F:ephrin receptor binding"/>
    <property type="evidence" value="ECO:0000353"/>
    <property type="project" value="MGI"/>
</dbReference>
<dbReference type="GO" id="GO:0071074">
    <property type="term" value="F:eukaryotic initiation factor eIF2 binding"/>
    <property type="evidence" value="ECO:0000353"/>
    <property type="project" value="ParkinsonsUK-UCL"/>
</dbReference>
<dbReference type="GO" id="GO:0140693">
    <property type="term" value="F:molecular condensate scaffold activity"/>
    <property type="evidence" value="ECO:0007669"/>
    <property type="project" value="Ensembl"/>
</dbReference>
<dbReference type="GO" id="GO:0019904">
    <property type="term" value="F:protein domain specific binding"/>
    <property type="evidence" value="ECO:0000353"/>
    <property type="project" value="MGI"/>
</dbReference>
<dbReference type="GO" id="GO:0004860">
    <property type="term" value="F:protein kinase inhibitor activity"/>
    <property type="evidence" value="ECO:0000250"/>
    <property type="project" value="UniProtKB"/>
</dbReference>
<dbReference type="GO" id="GO:0140311">
    <property type="term" value="F:protein sequestering activity"/>
    <property type="evidence" value="ECO:0007669"/>
    <property type="project" value="Ensembl"/>
</dbReference>
<dbReference type="GO" id="GO:0030971">
    <property type="term" value="F:receptor tyrosine kinase binding"/>
    <property type="evidence" value="ECO:0007669"/>
    <property type="project" value="Ensembl"/>
</dbReference>
<dbReference type="GO" id="GO:0035591">
    <property type="term" value="F:signaling adaptor activity"/>
    <property type="evidence" value="ECO:0007669"/>
    <property type="project" value="Ensembl"/>
</dbReference>
<dbReference type="GO" id="GO:0007015">
    <property type="term" value="P:actin filament organization"/>
    <property type="evidence" value="ECO:0000315"/>
    <property type="project" value="MGI"/>
</dbReference>
<dbReference type="GO" id="GO:0140374">
    <property type="term" value="P:antiviral innate immune response"/>
    <property type="evidence" value="ECO:0000250"/>
    <property type="project" value="UniProtKB"/>
</dbReference>
<dbReference type="GO" id="GO:0016477">
    <property type="term" value="P:cell migration"/>
    <property type="evidence" value="ECO:0000315"/>
    <property type="project" value="MGI"/>
</dbReference>
<dbReference type="GO" id="GO:0048013">
    <property type="term" value="P:ephrin receptor signaling pathway"/>
    <property type="evidence" value="ECO:0000315"/>
    <property type="project" value="MGI"/>
</dbReference>
<dbReference type="GO" id="GO:0030032">
    <property type="term" value="P:lamellipodium assembly"/>
    <property type="evidence" value="ECO:0000315"/>
    <property type="project" value="MGI"/>
</dbReference>
<dbReference type="GO" id="GO:0046627">
    <property type="term" value="P:negative regulation of insulin receptor signaling pathway"/>
    <property type="evidence" value="ECO:0007669"/>
    <property type="project" value="Ensembl"/>
</dbReference>
<dbReference type="GO" id="GO:1903898">
    <property type="term" value="P:negative regulation of PERK-mediated unfolded protein response"/>
    <property type="evidence" value="ECO:0000316"/>
    <property type="project" value="ParkinsonsUK-UCL"/>
</dbReference>
<dbReference type="GO" id="GO:0050860">
    <property type="term" value="P:negative regulation of T cell receptor signaling pathway"/>
    <property type="evidence" value="ECO:0007669"/>
    <property type="project" value="Ensembl"/>
</dbReference>
<dbReference type="GO" id="GO:0000122">
    <property type="term" value="P:negative regulation of transcription by RNA polymerase II"/>
    <property type="evidence" value="ECO:0000316"/>
    <property type="project" value="ParkinsonsUK-UCL"/>
</dbReference>
<dbReference type="GO" id="GO:0030838">
    <property type="term" value="P:positive regulation of actin filament polymerization"/>
    <property type="evidence" value="ECO:0000316"/>
    <property type="project" value="MGI"/>
</dbReference>
<dbReference type="GO" id="GO:1903676">
    <property type="term" value="P:positive regulation of cap-dependent translational initiation"/>
    <property type="evidence" value="ECO:0007669"/>
    <property type="project" value="Ensembl"/>
</dbReference>
<dbReference type="GO" id="GO:1903679">
    <property type="term" value="P:positive regulation of cap-independent translational initiation"/>
    <property type="evidence" value="ECO:0007669"/>
    <property type="project" value="Ensembl"/>
</dbReference>
<dbReference type="GO" id="GO:1902237">
    <property type="term" value="P:positive regulation of endoplasmic reticulum stress-induced intrinsic apoptotic signaling pathway"/>
    <property type="evidence" value="ECO:0000316"/>
    <property type="project" value="ParkinsonsUK-UCL"/>
</dbReference>
<dbReference type="GO" id="GO:0010976">
    <property type="term" value="P:positive regulation of neuron projection development"/>
    <property type="evidence" value="ECO:0000315"/>
    <property type="project" value="MGI"/>
</dbReference>
<dbReference type="GO" id="GO:0042102">
    <property type="term" value="P:positive regulation of T cell proliferation"/>
    <property type="evidence" value="ECO:0007669"/>
    <property type="project" value="Ensembl"/>
</dbReference>
<dbReference type="GO" id="GO:0045944">
    <property type="term" value="P:positive regulation of transcription by RNA polymerase II"/>
    <property type="evidence" value="ECO:0000250"/>
    <property type="project" value="UniProtKB"/>
</dbReference>
<dbReference type="GO" id="GO:0036493">
    <property type="term" value="P:positive regulation of translation in response to endoplasmic reticulum stress"/>
    <property type="evidence" value="ECO:0000316"/>
    <property type="project" value="ParkinsonsUK-UCL"/>
</dbReference>
<dbReference type="GO" id="GO:0030334">
    <property type="term" value="P:regulation of cell migration"/>
    <property type="evidence" value="ECO:0000316"/>
    <property type="project" value="MGI"/>
</dbReference>
<dbReference type="GO" id="GO:0036491">
    <property type="term" value="P:regulation of translation initiation in response to endoplasmic reticulum stress"/>
    <property type="evidence" value="ECO:0000316"/>
    <property type="project" value="ParkinsonsUK-UCL"/>
</dbReference>
<dbReference type="GO" id="GO:0034976">
    <property type="term" value="P:response to endoplasmic reticulum stress"/>
    <property type="evidence" value="ECO:0000316"/>
    <property type="project" value="ParkinsonsUK-UCL"/>
</dbReference>
<dbReference type="GO" id="GO:0051707">
    <property type="term" value="P:response to other organism"/>
    <property type="evidence" value="ECO:0000315"/>
    <property type="project" value="MGI"/>
</dbReference>
<dbReference type="GO" id="GO:0006930">
    <property type="term" value="P:substrate-dependent cell migration, cell extension"/>
    <property type="evidence" value="ECO:0000316"/>
    <property type="project" value="MGI"/>
</dbReference>
<dbReference type="GO" id="GO:0042110">
    <property type="term" value="P:T cell activation"/>
    <property type="evidence" value="ECO:0007669"/>
    <property type="project" value="Ensembl"/>
</dbReference>
<dbReference type="CDD" id="cd10408">
    <property type="entry name" value="SH2_Nck1"/>
    <property type="match status" value="1"/>
</dbReference>
<dbReference type="CDD" id="cd11900">
    <property type="entry name" value="SH3_Nck1_1"/>
    <property type="match status" value="1"/>
</dbReference>
<dbReference type="CDD" id="cd11901">
    <property type="entry name" value="SH3_Nck1_2"/>
    <property type="match status" value="1"/>
</dbReference>
<dbReference type="CDD" id="cd11904">
    <property type="entry name" value="SH3_Nck1_3"/>
    <property type="match status" value="1"/>
</dbReference>
<dbReference type="FunFam" id="2.30.30.40:FF:000061">
    <property type="entry name" value="Cytoplasmic protein"/>
    <property type="match status" value="1"/>
</dbReference>
<dbReference type="FunFam" id="2.30.30.40:FF:000110">
    <property type="entry name" value="Cytoplasmic protein"/>
    <property type="match status" value="1"/>
</dbReference>
<dbReference type="FunFam" id="2.30.30.40:FF:000126">
    <property type="entry name" value="Cytoplasmic protein"/>
    <property type="match status" value="1"/>
</dbReference>
<dbReference type="FunFam" id="3.30.505.10:FF:000027">
    <property type="entry name" value="Cytoplasmic protein nck1"/>
    <property type="match status" value="1"/>
</dbReference>
<dbReference type="Gene3D" id="3.30.505.10">
    <property type="entry name" value="SH2 domain"/>
    <property type="match status" value="1"/>
</dbReference>
<dbReference type="Gene3D" id="2.30.30.40">
    <property type="entry name" value="SH3 Domains"/>
    <property type="match status" value="3"/>
</dbReference>
<dbReference type="InterPro" id="IPR017304">
    <property type="entry name" value="NCK"/>
</dbReference>
<dbReference type="InterPro" id="IPR035882">
    <property type="entry name" value="Nck1_SH2"/>
</dbReference>
<dbReference type="InterPro" id="IPR035562">
    <property type="entry name" value="Nck1_SH3_1"/>
</dbReference>
<dbReference type="InterPro" id="IPR035564">
    <property type="entry name" value="Nck1_SH3_2"/>
</dbReference>
<dbReference type="InterPro" id="IPR035565">
    <property type="entry name" value="Nck1_SH3_3"/>
</dbReference>
<dbReference type="InterPro" id="IPR000980">
    <property type="entry name" value="SH2"/>
</dbReference>
<dbReference type="InterPro" id="IPR036860">
    <property type="entry name" value="SH2_dom_sf"/>
</dbReference>
<dbReference type="InterPro" id="IPR036028">
    <property type="entry name" value="SH3-like_dom_sf"/>
</dbReference>
<dbReference type="InterPro" id="IPR001452">
    <property type="entry name" value="SH3_domain"/>
</dbReference>
<dbReference type="InterPro" id="IPR051184">
    <property type="entry name" value="Tyrosine-phos_adapter"/>
</dbReference>
<dbReference type="PANTHER" id="PTHR19969:SF16">
    <property type="entry name" value="CYTOPLASMIC PROTEIN NCK1"/>
    <property type="match status" value="1"/>
</dbReference>
<dbReference type="PANTHER" id="PTHR19969">
    <property type="entry name" value="SH2-SH3 ADAPTOR PROTEIN-RELATED"/>
    <property type="match status" value="1"/>
</dbReference>
<dbReference type="Pfam" id="PF00017">
    <property type="entry name" value="SH2"/>
    <property type="match status" value="1"/>
</dbReference>
<dbReference type="Pfam" id="PF00018">
    <property type="entry name" value="SH3_1"/>
    <property type="match status" value="3"/>
</dbReference>
<dbReference type="PIRSF" id="PIRSF037874">
    <property type="entry name" value="Cytoplasmic_NCK"/>
    <property type="match status" value="1"/>
</dbReference>
<dbReference type="PRINTS" id="PR00401">
    <property type="entry name" value="SH2DOMAIN"/>
</dbReference>
<dbReference type="PRINTS" id="PR00452">
    <property type="entry name" value="SH3DOMAIN"/>
</dbReference>
<dbReference type="SMART" id="SM00252">
    <property type="entry name" value="SH2"/>
    <property type="match status" value="1"/>
</dbReference>
<dbReference type="SMART" id="SM00326">
    <property type="entry name" value="SH3"/>
    <property type="match status" value="3"/>
</dbReference>
<dbReference type="SUPFAM" id="SSF55550">
    <property type="entry name" value="SH2 domain"/>
    <property type="match status" value="1"/>
</dbReference>
<dbReference type="SUPFAM" id="SSF50044">
    <property type="entry name" value="SH3-domain"/>
    <property type="match status" value="3"/>
</dbReference>
<dbReference type="PROSITE" id="PS50001">
    <property type="entry name" value="SH2"/>
    <property type="match status" value="1"/>
</dbReference>
<dbReference type="PROSITE" id="PS50002">
    <property type="entry name" value="SH3"/>
    <property type="match status" value="3"/>
</dbReference>
<gene>
    <name type="primary">Nck1</name>
</gene>
<proteinExistence type="evidence at protein level"/>
<keyword id="KW-0007">Acetylation</keyword>
<keyword id="KW-0963">Cytoplasm</keyword>
<keyword id="KW-0256">Endoplasmic reticulum</keyword>
<keyword id="KW-0539">Nucleus</keyword>
<keyword id="KW-0597">Phosphoprotein</keyword>
<keyword id="KW-1185">Reference proteome</keyword>
<keyword id="KW-0677">Repeat</keyword>
<keyword id="KW-0727">SH2 domain</keyword>
<keyword id="KW-0728">SH3 domain</keyword>
<keyword id="KW-0810">Translation regulation</keyword>
<sequence>MAEEVVVVAKFDYVAQQEQELDIKKNERLWLLDDSKSWWRVRNSMNKTGFVPSNYVERKNSARKASIVKNLKDTLGIGKVKRKPSVPDTASPADDSFVDPGERLYDLNMPAFVKFNYMAEREDELSLIKGTKVIVMEKCSDGWWRGSYNGQIGWFPSNYVTEEGDSPLGDHVGSLSEKLAAVVNNLNTGQVLHVVQALYPFSSSNDEELNFEKGDVMDVIEKPENDPEWWKCRKINGMVGLVPKNYVTIMQNNPLTSGLEPSPPQCDYIRPSLTGKFAGNPWYYGKVTRHQAEMALNERGHEGDFLIRDSESSPNDFSVSLKAQGKNKHFKVQLKETVYCIGQRKFSTMEELVEHYKKAPIFTSEQGEKLYLVKHLS</sequence>
<reference key="1">
    <citation type="submission" date="1998-08" db="EMBL/GenBank/DDBJ databases">
        <title>Mus musculus SH2/SH3 adaptor protein (Nck) mRNA, complete cds.</title>
        <authorList>
            <person name="Miyoshi-Akiyama T."/>
            <person name="Mayer B.J."/>
        </authorList>
    </citation>
    <scope>NUCLEOTIDE SEQUENCE [MRNA]</scope>
</reference>
<reference key="2">
    <citation type="submission" date="1998-01" db="EMBL/GenBank/DDBJ databases">
        <authorList>
            <person name="Chen M."/>
            <person name="She H.Y."/>
            <person name="Li W."/>
        </authorList>
    </citation>
    <scope>NUCLEOTIDE SEQUENCE [MRNA]</scope>
</reference>
<reference key="3">
    <citation type="journal article" date="2009" name="PLoS Biol.">
        <title>Lineage-specific biology revealed by a finished genome assembly of the mouse.</title>
        <authorList>
            <person name="Church D.M."/>
            <person name="Goodstadt L."/>
            <person name="Hillier L.W."/>
            <person name="Zody M.C."/>
            <person name="Goldstein S."/>
            <person name="She X."/>
            <person name="Bult C.J."/>
            <person name="Agarwala R."/>
            <person name="Cherry J.L."/>
            <person name="DiCuccio M."/>
            <person name="Hlavina W."/>
            <person name="Kapustin Y."/>
            <person name="Meric P."/>
            <person name="Maglott D."/>
            <person name="Birtle Z."/>
            <person name="Marques A.C."/>
            <person name="Graves T."/>
            <person name="Zhou S."/>
            <person name="Teague B."/>
            <person name="Potamousis K."/>
            <person name="Churas C."/>
            <person name="Place M."/>
            <person name="Herschleb J."/>
            <person name="Runnheim R."/>
            <person name="Forrest D."/>
            <person name="Amos-Landgraf J."/>
            <person name="Schwartz D.C."/>
            <person name="Cheng Z."/>
            <person name="Lindblad-Toh K."/>
            <person name="Eichler E.E."/>
            <person name="Ponting C.P."/>
        </authorList>
    </citation>
    <scope>NUCLEOTIDE SEQUENCE [LARGE SCALE GENOMIC DNA]</scope>
    <source>
        <strain>C57BL/6J</strain>
    </source>
</reference>
<reference key="4">
    <citation type="submission" date="2005-07" db="EMBL/GenBank/DDBJ databases">
        <authorList>
            <person name="Mural R.J."/>
            <person name="Adams M.D."/>
            <person name="Myers E.W."/>
            <person name="Smith H.O."/>
            <person name="Venter J.C."/>
        </authorList>
    </citation>
    <scope>NUCLEOTIDE SEQUENCE [LARGE SCALE GENOMIC DNA]</scope>
</reference>
<reference key="5">
    <citation type="journal article" date="2004" name="Genome Res.">
        <title>The status, quality, and expansion of the NIH full-length cDNA project: the Mammalian Gene Collection (MGC).</title>
        <authorList>
            <consortium name="The MGC Project Team"/>
        </authorList>
    </citation>
    <scope>NUCLEOTIDE SEQUENCE [LARGE SCALE MRNA]</scope>
    <source>
        <strain>FVB/N</strain>
        <tissue>Mammary tumor</tissue>
    </source>
</reference>
<reference key="6">
    <citation type="journal article" date="1998" name="J. Biol. Chem.">
        <title>Identification of vascular endothelial growth factor receptor-1 tyrosine phosphorylation sites and binding of SH2 domain-containing molecules.</title>
        <authorList>
            <person name="Ito N."/>
            <person name="Wernstedt C."/>
            <person name="Engstrom U."/>
            <person name="Claesson-Welsh L."/>
        </authorList>
    </citation>
    <scope>INTERACTION WITH FLT1</scope>
</reference>
<reference key="7">
    <citation type="journal article" date="2008" name="J. Proteome Res.">
        <title>Large-scale identification and evolution indexing of tyrosine phosphorylation sites from murine brain.</title>
        <authorList>
            <person name="Ballif B.A."/>
            <person name="Carey G.R."/>
            <person name="Sunyaev S.R."/>
            <person name="Gygi S.P."/>
        </authorList>
    </citation>
    <scope>PHOSPHORYLATION [LARGE SCALE ANALYSIS] AT TYR-105</scope>
    <scope>IDENTIFICATION BY MASS SPECTROMETRY [LARGE SCALE ANALYSIS]</scope>
    <source>
        <tissue>Brain</tissue>
    </source>
</reference>
<reference key="8">
    <citation type="journal article" date="2010" name="Cell">
        <title>A tissue-specific atlas of mouse protein phosphorylation and expression.</title>
        <authorList>
            <person name="Huttlin E.L."/>
            <person name="Jedrychowski M.P."/>
            <person name="Elias J.E."/>
            <person name="Goswami T."/>
            <person name="Rad R."/>
            <person name="Beausoleil S.A."/>
            <person name="Villen J."/>
            <person name="Haas W."/>
            <person name="Sowa M.E."/>
            <person name="Gygi S.P."/>
        </authorList>
    </citation>
    <scope>PHOSPHORYLATION [LARGE SCALE ANALYSIS] AT SER-85; TYR-105 AND SER-166</scope>
    <scope>IDENTIFICATION BY MASS SPECTROMETRY [LARGE SCALE ANALYSIS]</scope>
    <source>
        <tissue>Brain</tissue>
        <tissue>Heart</tissue>
        <tissue>Kidney</tissue>
        <tissue>Liver</tissue>
        <tissue>Lung</tissue>
        <tissue>Pancreas</tissue>
        <tissue>Spleen</tissue>
        <tissue>Testis</tissue>
    </source>
</reference>